<protein>
    <recommendedName>
        <fullName evidence="1">Aromatic amino acid transport protein AroP</fullName>
    </recommendedName>
    <alternativeName>
        <fullName evidence="1">Aromatic amino acid:H(+) symporter AroP</fullName>
    </alternativeName>
    <alternativeName>
        <fullName evidence="1">General aromatic amino acid permease</fullName>
    </alternativeName>
</protein>
<feature type="chain" id="PRO_0000054194" description="Aromatic amino acid transport protein AroP">
    <location>
        <begin position="1"/>
        <end position="456"/>
    </location>
</feature>
<feature type="topological domain" description="Cytoplasmic" evidence="2">
    <location>
        <begin position="1"/>
        <end position="18"/>
    </location>
</feature>
<feature type="transmembrane region" description="Helical" evidence="2">
    <location>
        <begin position="19"/>
        <end position="39"/>
    </location>
</feature>
<feature type="topological domain" description="Periplasmic" evidence="2">
    <location>
        <begin position="40"/>
        <end position="41"/>
    </location>
</feature>
<feature type="transmembrane region" description="Helical" evidence="2">
    <location>
        <begin position="42"/>
        <end position="62"/>
    </location>
</feature>
<feature type="topological domain" description="Cytoplasmic" evidence="2">
    <location>
        <begin position="63"/>
        <end position="85"/>
    </location>
</feature>
<feature type="transmembrane region" description="Helical" evidence="2">
    <location>
        <begin position="86"/>
        <end position="106"/>
    </location>
</feature>
<feature type="topological domain" description="Periplasmic" evidence="2">
    <location>
        <begin position="107"/>
        <end position="116"/>
    </location>
</feature>
<feature type="transmembrane region" description="Helical" evidence="2">
    <location>
        <begin position="117"/>
        <end position="137"/>
    </location>
</feature>
<feature type="topological domain" description="Cytoplasmic" evidence="2">
    <location>
        <begin position="138"/>
        <end position="154"/>
    </location>
</feature>
<feature type="transmembrane region" description="Helical" evidence="2">
    <location>
        <begin position="155"/>
        <end position="175"/>
    </location>
</feature>
<feature type="topological domain" description="Periplasmic" evidence="2">
    <location>
        <begin position="176"/>
        <end position="200"/>
    </location>
</feature>
<feature type="transmembrane region" description="Helical" evidence="2">
    <location>
        <begin position="201"/>
        <end position="221"/>
    </location>
</feature>
<feature type="topological domain" description="Cytoplasmic" evidence="2">
    <location>
        <begin position="222"/>
        <end position="239"/>
    </location>
</feature>
<feature type="transmembrane region" description="Helical" evidence="2">
    <location>
        <begin position="240"/>
        <end position="260"/>
    </location>
</feature>
<feature type="topological domain" description="Periplasmic" evidence="2">
    <location>
        <begin position="261"/>
        <end position="270"/>
    </location>
</feature>
<feature type="transmembrane region" description="Helical" evidence="2">
    <location>
        <begin position="271"/>
        <end position="291"/>
    </location>
</feature>
<feature type="topological domain" description="Cytoplasmic" evidence="2">
    <location>
        <begin position="292"/>
        <end position="332"/>
    </location>
</feature>
<feature type="transmembrane region" description="Helical" evidence="2">
    <location>
        <begin position="333"/>
        <end position="353"/>
    </location>
</feature>
<feature type="topological domain" description="Periplasmic" evidence="2">
    <location>
        <begin position="354"/>
        <end position="357"/>
    </location>
</feature>
<feature type="transmembrane region" description="Helical" evidence="2">
    <location>
        <begin position="358"/>
        <end position="378"/>
    </location>
</feature>
<feature type="topological domain" description="Cytoplasmic" evidence="2">
    <location>
        <begin position="379"/>
        <end position="398"/>
    </location>
</feature>
<feature type="transmembrane region" description="Helical" evidence="2">
    <location>
        <begin position="399"/>
        <end position="419"/>
    </location>
</feature>
<feature type="topological domain" description="Periplasmic" evidence="2">
    <location>
        <begin position="420"/>
        <end position="424"/>
    </location>
</feature>
<feature type="transmembrane region" description="Helical" evidence="2">
    <location>
        <begin position="425"/>
        <end position="445"/>
    </location>
</feature>
<feature type="topological domain" description="Cytoplasmic" evidence="2">
    <location>
        <begin position="446"/>
        <end position="456"/>
    </location>
</feature>
<accession>Q8FL49</accession>
<organism>
    <name type="scientific">Escherichia coli O6:H1 (strain CFT073 / ATCC 700928 / UPEC)</name>
    <dbReference type="NCBI Taxonomy" id="199310"/>
    <lineage>
        <taxon>Bacteria</taxon>
        <taxon>Pseudomonadati</taxon>
        <taxon>Pseudomonadota</taxon>
        <taxon>Gammaproteobacteria</taxon>
        <taxon>Enterobacterales</taxon>
        <taxon>Enterobacteriaceae</taxon>
        <taxon>Escherichia</taxon>
    </lineage>
</organism>
<comment type="function">
    <text evidence="1">Permease that is involved in the active transport across the cytoplasmic membrane of all three aromatic amino acids, phenylalanine, tyrosine and tryptophan.</text>
</comment>
<comment type="catalytic activity">
    <reaction evidence="1">
        <text>L-phenylalanine(in) + H(+)(in) = L-phenylalanine(out) + H(+)(out)</text>
        <dbReference type="Rhea" id="RHEA:28923"/>
        <dbReference type="ChEBI" id="CHEBI:15378"/>
        <dbReference type="ChEBI" id="CHEBI:58095"/>
    </reaction>
    <physiologicalReaction direction="right-to-left" evidence="1">
        <dbReference type="Rhea" id="RHEA:28925"/>
    </physiologicalReaction>
</comment>
<comment type="catalytic activity">
    <reaction evidence="1">
        <text>L-tryptophan(in) + H(+)(in) = L-tryptophan(out) + H(+)(out)</text>
        <dbReference type="Rhea" id="RHEA:28879"/>
        <dbReference type="ChEBI" id="CHEBI:15378"/>
        <dbReference type="ChEBI" id="CHEBI:57912"/>
    </reaction>
    <physiologicalReaction direction="right-to-left" evidence="1">
        <dbReference type="Rhea" id="RHEA:28881"/>
    </physiologicalReaction>
</comment>
<comment type="catalytic activity">
    <reaction evidence="1">
        <text>L-tyrosine(in) + H(+)(in) = L-tyrosine(out) + H(+)(out)</text>
        <dbReference type="Rhea" id="RHEA:28875"/>
        <dbReference type="ChEBI" id="CHEBI:15378"/>
        <dbReference type="ChEBI" id="CHEBI:58315"/>
    </reaction>
    <physiologicalReaction direction="right-to-left" evidence="1">
        <dbReference type="Rhea" id="RHEA:28877"/>
    </physiologicalReaction>
</comment>
<comment type="subcellular location">
    <subcellularLocation>
        <location evidence="1">Cell inner membrane</location>
        <topology evidence="1">Multi-pass membrane protein</topology>
    </subcellularLocation>
</comment>
<comment type="similarity">
    <text evidence="3">Belongs to the amino acid-polyamine-organocation (APC) superfamily. Amino acid transporter (AAT) (TC 2.A.3.1) family.</text>
</comment>
<keyword id="KW-0029">Amino-acid transport</keyword>
<keyword id="KW-0997">Cell inner membrane</keyword>
<keyword id="KW-1003">Cell membrane</keyword>
<keyword id="KW-0472">Membrane</keyword>
<keyword id="KW-1185">Reference proteome</keyword>
<keyword id="KW-0812">Transmembrane</keyword>
<keyword id="KW-1133">Transmembrane helix</keyword>
<keyword id="KW-0813">Transport</keyword>
<sequence length="456" mass="49559">MEGQQHGEQLKRGLKNRHIQLIALGGAIGTGLFLGSASVIQSAGPGIILGYAIAGFIAFLIMRQLGEMVVEEPVAGSFSHFAYKYWGSFAGFASGWNYWVLYVLVAMAELTAVGKYIQFWYPEIPTWVSAAVFFVVINAINLTNVKVFGEMEFWFAIIKVIAVVAMIIFGAWLLFSGNGGPQASVSNLWDQGGFLPHGFTGLVMMMAIIMFSFGGLELVGITAAEADNPEQSIPKATNQVIYRILIFYIGSLAVLLSLMPWTRVTADTSPFVLIFHELGDTFVANALNIVVLTAALSVYNSCVYCNSRMLFGLAQQGNAPKALASVDKRGVPVNTILVSALVTALCVLINYLAPESAFGLLMALVVSALVINWAMISLAHMKFRRAKQEQGVVTRFPALLYPLGNWICLLFMAAVLVIMLMTPGMAISVYLIPVWLIVLGIGYLFKEKTAKAVKAH</sequence>
<name>AROP_ECOL6</name>
<dbReference type="EMBL" id="AE014075">
    <property type="protein sequence ID" value="AAN78629.1"/>
    <property type="molecule type" value="Genomic_DNA"/>
</dbReference>
<dbReference type="RefSeq" id="WP_000399017.1">
    <property type="nucleotide sequence ID" value="NZ_CP051263.1"/>
</dbReference>
<dbReference type="SMR" id="Q8FL49"/>
<dbReference type="STRING" id="199310.c0131"/>
<dbReference type="KEGG" id="ecc:c0131"/>
<dbReference type="eggNOG" id="COG1113">
    <property type="taxonomic scope" value="Bacteria"/>
</dbReference>
<dbReference type="HOGENOM" id="CLU_007946_9_3_6"/>
<dbReference type="BioCyc" id="ECOL199310:C0131-MONOMER"/>
<dbReference type="Proteomes" id="UP000001410">
    <property type="component" value="Chromosome"/>
</dbReference>
<dbReference type="GO" id="GO:0005886">
    <property type="term" value="C:plasma membrane"/>
    <property type="evidence" value="ECO:0007669"/>
    <property type="project" value="UniProtKB-SubCell"/>
</dbReference>
<dbReference type="GO" id="GO:0006865">
    <property type="term" value="P:amino acid transport"/>
    <property type="evidence" value="ECO:0007669"/>
    <property type="project" value="UniProtKB-KW"/>
</dbReference>
<dbReference type="GO" id="GO:0055085">
    <property type="term" value="P:transmembrane transport"/>
    <property type="evidence" value="ECO:0007669"/>
    <property type="project" value="InterPro"/>
</dbReference>
<dbReference type="FunFam" id="1.20.1740.10:FF:000001">
    <property type="entry name" value="Amino acid permease"/>
    <property type="match status" value="1"/>
</dbReference>
<dbReference type="Gene3D" id="1.20.1740.10">
    <property type="entry name" value="Amino acid/polyamine transporter I"/>
    <property type="match status" value="1"/>
</dbReference>
<dbReference type="InterPro" id="IPR004841">
    <property type="entry name" value="AA-permease/SLC12A_dom"/>
</dbReference>
<dbReference type="InterPro" id="IPR004840">
    <property type="entry name" value="Amino_acid_permease_CS"/>
</dbReference>
<dbReference type="NCBIfam" id="NF007594">
    <property type="entry name" value="PRK10238.1"/>
    <property type="match status" value="1"/>
</dbReference>
<dbReference type="PANTHER" id="PTHR43495:SF4">
    <property type="entry name" value="AROMATIC AMINO ACID TRANSPORT PROTEIN AROP"/>
    <property type="match status" value="1"/>
</dbReference>
<dbReference type="PANTHER" id="PTHR43495">
    <property type="entry name" value="GABA PERMEASE"/>
    <property type="match status" value="1"/>
</dbReference>
<dbReference type="Pfam" id="PF00324">
    <property type="entry name" value="AA_permease"/>
    <property type="match status" value="1"/>
</dbReference>
<dbReference type="PIRSF" id="PIRSF006060">
    <property type="entry name" value="AA_transporter"/>
    <property type="match status" value="1"/>
</dbReference>
<dbReference type="PROSITE" id="PS00218">
    <property type="entry name" value="AMINO_ACID_PERMEASE_1"/>
    <property type="match status" value="1"/>
</dbReference>
<gene>
    <name type="primary">aroP</name>
    <name type="ordered locus">c0131</name>
</gene>
<proteinExistence type="inferred from homology"/>
<evidence type="ECO:0000250" key="1">
    <source>
        <dbReference type="UniProtKB" id="P15993"/>
    </source>
</evidence>
<evidence type="ECO:0000255" key="2"/>
<evidence type="ECO:0000305" key="3"/>
<reference key="1">
    <citation type="journal article" date="2002" name="Proc. Natl. Acad. Sci. U.S.A.">
        <title>Extensive mosaic structure revealed by the complete genome sequence of uropathogenic Escherichia coli.</title>
        <authorList>
            <person name="Welch R.A."/>
            <person name="Burland V."/>
            <person name="Plunkett G. III"/>
            <person name="Redford P."/>
            <person name="Roesch P."/>
            <person name="Rasko D."/>
            <person name="Buckles E.L."/>
            <person name="Liou S.-R."/>
            <person name="Boutin A."/>
            <person name="Hackett J."/>
            <person name="Stroud D."/>
            <person name="Mayhew G.F."/>
            <person name="Rose D.J."/>
            <person name="Zhou S."/>
            <person name="Schwartz D.C."/>
            <person name="Perna N.T."/>
            <person name="Mobley H.L.T."/>
            <person name="Donnenberg M.S."/>
            <person name="Blattner F.R."/>
        </authorList>
    </citation>
    <scope>NUCLEOTIDE SEQUENCE [LARGE SCALE GENOMIC DNA]</scope>
    <source>
        <strain>CFT073 / ATCC 700928 / UPEC</strain>
    </source>
</reference>